<sequence>MSDEEHHFESKADAGASKTYPQQAGTIRKNGYIVIKGRPCKVVEVSTSKTGKHGHAKCHFVAIDIFNGKKLEDIVPSSHNCDVPHVNRTDYQLIDISEDGFVSLLTESGNTKDDLRLPTDESLLKQVKDGFQEGKDLVVSVMSAMGEEQINAIKDIGTKN</sequence>
<feature type="chain" id="PRO_0000142479" description="Eukaryotic translation initiation factor 5A-3">
    <location>
        <begin position="1"/>
        <end position="160"/>
    </location>
</feature>
<feature type="region of interest" description="Disordered" evidence="3">
    <location>
        <begin position="1"/>
        <end position="21"/>
    </location>
</feature>
<feature type="compositionally biased region" description="Basic and acidic residues" evidence="3">
    <location>
        <begin position="1"/>
        <end position="12"/>
    </location>
</feature>
<feature type="modified residue" description="Hypusine" evidence="2">
    <location>
        <position position="52"/>
    </location>
</feature>
<gene>
    <name type="primary">EIF5A3</name>
</gene>
<evidence type="ECO:0000250" key="1">
    <source>
        <dbReference type="UniProtKB" id="P23301"/>
    </source>
</evidence>
<evidence type="ECO:0000250" key="2">
    <source>
        <dbReference type="UniProtKB" id="Q9XI91"/>
    </source>
</evidence>
<evidence type="ECO:0000256" key="3">
    <source>
        <dbReference type="SAM" id="MobiDB-lite"/>
    </source>
</evidence>
<evidence type="ECO:0000305" key="4"/>
<keyword id="KW-0385">Hypusine</keyword>
<keyword id="KW-0396">Initiation factor</keyword>
<keyword id="KW-0648">Protein biosynthesis</keyword>
<keyword id="KW-1185">Reference proteome</keyword>
<comment type="function">
    <text evidence="1">Translation factor that promotes translation elongation and termination, particularly upon ribosome stalling at specific amino acid sequence contexts (By similarity). Binds between the exit (E) and peptidyl (P) site of the ribosome and promotes rescue of stalled ribosome: specifically required for efficient translation of polyproline-containing peptides as well as other motifs that stall the ribosome (By similarity). Acts as a ribosome quality control (RQC) cofactor by joining the RQC complex to facilitate peptidyl transfer during CAT tailing step (By similarity).</text>
</comment>
<comment type="PTM">
    <text evidence="2">Lys-52 undergoes hypusination, a unique post-translational modification that consists in the addition of a butylamino group from spermidine to lysine side chain, leading to the formation of the unusual amino acid hypusine. eIF-5As are the only known proteins to undergo this modification, which is essential for their function.</text>
</comment>
<comment type="similarity">
    <text evidence="4">Belongs to the eIF-5A family.</text>
</comment>
<proteinExistence type="evidence at transcript level"/>
<protein>
    <recommendedName>
        <fullName>Eukaryotic translation initiation factor 5A-3</fullName>
        <shortName>eIF-5A-3</shortName>
    </recommendedName>
    <alternativeName>
        <fullName>eIF-4D</fullName>
    </alternativeName>
</protein>
<dbReference type="EMBL" id="AB004824">
    <property type="protein sequence ID" value="BAA20877.1"/>
    <property type="molecule type" value="mRNA"/>
</dbReference>
<dbReference type="PIR" id="T07133">
    <property type="entry name" value="T07133"/>
</dbReference>
<dbReference type="SMR" id="P56335"/>
<dbReference type="FunCoup" id="P56335">
    <property type="interactions" value="1860"/>
</dbReference>
<dbReference type="STRING" id="4113.P56335"/>
<dbReference type="PaxDb" id="4113-PGSC0003DMT400028926"/>
<dbReference type="EnsemblPlants" id="PGSC0003DMT400028926">
    <property type="protein sequence ID" value="PGSC0003DMT400028926"/>
    <property type="gene ID" value="PGSC0003DMG400011137"/>
</dbReference>
<dbReference type="EnsemblPlants" id="RHC07H1G0196.2.1">
    <property type="protein sequence ID" value="RHC07H1G0196.2.1"/>
    <property type="gene ID" value="RHC07H1G0196.2"/>
</dbReference>
<dbReference type="Gramene" id="PGSC0003DMT400028926">
    <property type="protein sequence ID" value="PGSC0003DMT400028926"/>
    <property type="gene ID" value="PGSC0003DMG400011137"/>
</dbReference>
<dbReference type="Gramene" id="RHC07H1G0196.2.1">
    <property type="protein sequence ID" value="RHC07H1G0196.2.1"/>
    <property type="gene ID" value="RHC07H1G0196.2"/>
</dbReference>
<dbReference type="eggNOG" id="KOG3271">
    <property type="taxonomic scope" value="Eukaryota"/>
</dbReference>
<dbReference type="HOGENOM" id="CLU_102600_1_0_1"/>
<dbReference type="InParanoid" id="P56335"/>
<dbReference type="OMA" id="TIMINIQ"/>
<dbReference type="OrthoDB" id="9975114at2759"/>
<dbReference type="Proteomes" id="UP000011115">
    <property type="component" value="Unassembled WGS sequence"/>
</dbReference>
<dbReference type="ExpressionAtlas" id="P56335">
    <property type="expression patterns" value="baseline"/>
</dbReference>
<dbReference type="GO" id="GO:0043022">
    <property type="term" value="F:ribosome binding"/>
    <property type="evidence" value="ECO:0007669"/>
    <property type="project" value="InterPro"/>
</dbReference>
<dbReference type="GO" id="GO:0003723">
    <property type="term" value="F:RNA binding"/>
    <property type="evidence" value="ECO:0007669"/>
    <property type="project" value="InterPro"/>
</dbReference>
<dbReference type="GO" id="GO:0003746">
    <property type="term" value="F:translation elongation factor activity"/>
    <property type="evidence" value="ECO:0000318"/>
    <property type="project" value="GO_Central"/>
</dbReference>
<dbReference type="GO" id="GO:0003743">
    <property type="term" value="F:translation initiation factor activity"/>
    <property type="evidence" value="ECO:0007669"/>
    <property type="project" value="UniProtKB-KW"/>
</dbReference>
<dbReference type="GO" id="GO:0045901">
    <property type="term" value="P:positive regulation of translational elongation"/>
    <property type="evidence" value="ECO:0007669"/>
    <property type="project" value="InterPro"/>
</dbReference>
<dbReference type="GO" id="GO:0045905">
    <property type="term" value="P:positive regulation of translational termination"/>
    <property type="evidence" value="ECO:0007669"/>
    <property type="project" value="InterPro"/>
</dbReference>
<dbReference type="GO" id="GO:0006414">
    <property type="term" value="P:translational elongation"/>
    <property type="evidence" value="ECO:0000318"/>
    <property type="project" value="GO_Central"/>
</dbReference>
<dbReference type="CDD" id="cd04468">
    <property type="entry name" value="S1_eIF5A"/>
    <property type="match status" value="1"/>
</dbReference>
<dbReference type="FunFam" id="2.30.30.30:FF:000012">
    <property type="entry name" value="Eukaryotic translation initiation factor 5A"/>
    <property type="match status" value="1"/>
</dbReference>
<dbReference type="FunFam" id="2.40.50.140:FF:000034">
    <property type="entry name" value="Eukaryotic translation initiation factor 5A"/>
    <property type="match status" value="1"/>
</dbReference>
<dbReference type="Gene3D" id="2.30.30.30">
    <property type="match status" value="1"/>
</dbReference>
<dbReference type="Gene3D" id="2.40.50.140">
    <property type="entry name" value="Nucleic acid-binding proteins"/>
    <property type="match status" value="1"/>
</dbReference>
<dbReference type="InterPro" id="IPR001884">
    <property type="entry name" value="IF5A-like"/>
</dbReference>
<dbReference type="InterPro" id="IPR048670">
    <property type="entry name" value="IF5A-like_N"/>
</dbReference>
<dbReference type="InterPro" id="IPR012340">
    <property type="entry name" value="NA-bd_OB-fold"/>
</dbReference>
<dbReference type="InterPro" id="IPR014722">
    <property type="entry name" value="Rib_uL2_dom2"/>
</dbReference>
<dbReference type="InterPro" id="IPR019769">
    <property type="entry name" value="Trans_elong_IF5A_hypusine_site"/>
</dbReference>
<dbReference type="InterPro" id="IPR020189">
    <property type="entry name" value="Transl_elong_IF5A_C"/>
</dbReference>
<dbReference type="InterPro" id="IPR008991">
    <property type="entry name" value="Translation_prot_SH3-like_sf"/>
</dbReference>
<dbReference type="NCBIfam" id="TIGR00037">
    <property type="entry name" value="eIF_5A"/>
    <property type="match status" value="1"/>
</dbReference>
<dbReference type="PANTHER" id="PTHR11673">
    <property type="entry name" value="TRANSLATION INITIATION FACTOR 5A FAMILY MEMBER"/>
    <property type="match status" value="1"/>
</dbReference>
<dbReference type="Pfam" id="PF01287">
    <property type="entry name" value="eIF-5a"/>
    <property type="match status" value="1"/>
</dbReference>
<dbReference type="Pfam" id="PF21485">
    <property type="entry name" value="IF5A-like_N"/>
    <property type="match status" value="1"/>
</dbReference>
<dbReference type="PIRSF" id="PIRSF003025">
    <property type="entry name" value="eIF5A"/>
    <property type="match status" value="1"/>
</dbReference>
<dbReference type="SMART" id="SM01376">
    <property type="entry name" value="eIF-5a"/>
    <property type="match status" value="1"/>
</dbReference>
<dbReference type="SUPFAM" id="SSF50249">
    <property type="entry name" value="Nucleic acid-binding proteins"/>
    <property type="match status" value="1"/>
</dbReference>
<dbReference type="SUPFAM" id="SSF50104">
    <property type="entry name" value="Translation proteins SH3-like domain"/>
    <property type="match status" value="1"/>
</dbReference>
<dbReference type="PROSITE" id="PS00302">
    <property type="entry name" value="IF5A_HYPUSINE"/>
    <property type="match status" value="1"/>
</dbReference>
<reference key="1">
    <citation type="online journal article" date="1997" name="Plant Gene Register">
        <title>Nucleotide sequence of five cDNAs encoding eukaryotic translation initiation factor 5A (eIF-5A) from potato.</title>
        <authorList>
            <person name="In J.G."/>
            <person name="Fujino K."/>
            <person name="Kikuta Y."/>
        </authorList>
        <locator>PGR97-147</locator>
    </citation>
    <scope>NUCLEOTIDE SEQUENCE [MRNA]</scope>
    <source>
        <strain>cv. Irish Cobbler</strain>
    </source>
</reference>
<reference key="2">
    <citation type="journal article" date="2011" name="Nature">
        <title>Genome sequence and analysis of the tuber crop potato.</title>
        <authorList>
            <consortium name="The Potato Genome Sequencing Consortium"/>
        </authorList>
    </citation>
    <scope>NUCLEOTIDE SEQUENCE [LARGE SCALE GENOMIC DNA]</scope>
    <source>
        <strain>cv. DM1-3 516 R44</strain>
    </source>
</reference>
<organism>
    <name type="scientific">Solanum tuberosum</name>
    <name type="common">Potato</name>
    <dbReference type="NCBI Taxonomy" id="4113"/>
    <lineage>
        <taxon>Eukaryota</taxon>
        <taxon>Viridiplantae</taxon>
        <taxon>Streptophyta</taxon>
        <taxon>Embryophyta</taxon>
        <taxon>Tracheophyta</taxon>
        <taxon>Spermatophyta</taxon>
        <taxon>Magnoliopsida</taxon>
        <taxon>eudicotyledons</taxon>
        <taxon>Gunneridae</taxon>
        <taxon>Pentapetalae</taxon>
        <taxon>asterids</taxon>
        <taxon>lamiids</taxon>
        <taxon>Solanales</taxon>
        <taxon>Solanaceae</taxon>
        <taxon>Solanoideae</taxon>
        <taxon>Solaneae</taxon>
        <taxon>Solanum</taxon>
    </lineage>
</organism>
<accession>P56335</accession>
<name>IF5A3_SOLTU</name>